<sequence length="275" mass="29314">MRMTSSSFVSYCTPGLCQFMAMLPTAGHLLPLLLVIGTGGTVPSPQVPPRGCYVAKEAGERTFRCSQAGLSAVPSGIPNDTRKLYLDANQLASVPAGAFQHLPVLEELDLSHNALAHLSGAAFQGLEGTLRHLDLSANQLASVPVEAFVGLQIQVNLSANPWHCDCALQEVLRQVRLVPGTGTGIVCGSGARPDLVGQEFLLLAGEEELCGSGWGGARRSTDVALLVTMGGWLTLMVAYLVHYVWQNRDETRRSLKRAPVLPVRSEDSSILSTVV</sequence>
<feature type="signal peptide" evidence="1">
    <location>
        <begin position="1"/>
        <end position="41"/>
    </location>
</feature>
<feature type="chain" id="PRO_0000345962" description="Leucine-rich repeat-containing protein 3C">
    <location>
        <begin position="42"/>
        <end position="275"/>
    </location>
</feature>
<feature type="transmembrane region" description="Helical" evidence="1">
    <location>
        <begin position="225"/>
        <end position="245"/>
    </location>
</feature>
<feature type="domain" description="LRRNT">
    <location>
        <begin position="42"/>
        <end position="79"/>
    </location>
</feature>
<feature type="repeat" description="LRR 1">
    <location>
        <begin position="80"/>
        <end position="101"/>
    </location>
</feature>
<feature type="repeat" description="LRR 2">
    <location>
        <begin position="104"/>
        <end position="125"/>
    </location>
</feature>
<feature type="repeat" description="LRR 3">
    <location>
        <begin position="129"/>
        <end position="150"/>
    </location>
</feature>
<feature type="domain" description="LRRCT">
    <location>
        <begin position="160"/>
        <end position="212"/>
    </location>
</feature>
<feature type="glycosylation site" description="N-linked (GlcNAc...) asparagine" evidence="1">
    <location>
        <position position="156"/>
    </location>
</feature>
<evidence type="ECO:0000255" key="1"/>
<evidence type="ECO:0000305" key="2"/>
<name>LRR3C_HUMAN</name>
<accession>A6NJW4</accession>
<dbReference type="EMBL" id="AC090844">
    <property type="status" value="NOT_ANNOTATED_CDS"/>
    <property type="molecule type" value="Genomic_DNA"/>
</dbReference>
<dbReference type="EMBL" id="CH471152">
    <property type="protein sequence ID" value="EAW60623.1"/>
    <property type="status" value="ALT_SEQ"/>
    <property type="molecule type" value="Genomic_DNA"/>
</dbReference>
<dbReference type="EMBL" id="DY655553">
    <property type="status" value="NOT_ANNOTATED_CDS"/>
    <property type="molecule type" value="mRNA"/>
</dbReference>
<dbReference type="CCDS" id="CCDS54121.1"/>
<dbReference type="RefSeq" id="NP_001182474.1">
    <property type="nucleotide sequence ID" value="NM_001195545.2"/>
</dbReference>
<dbReference type="RefSeq" id="XP_011522460.1">
    <property type="nucleotide sequence ID" value="XM_011524158.2"/>
</dbReference>
<dbReference type="RefSeq" id="XP_016879492.1">
    <property type="nucleotide sequence ID" value="XM_017024003.1"/>
</dbReference>
<dbReference type="RefSeq" id="XP_054170613.1">
    <property type="nucleotide sequence ID" value="XM_054314638.1"/>
</dbReference>
<dbReference type="SMR" id="A6NJW4"/>
<dbReference type="BioGRID" id="611008">
    <property type="interactions" value="1"/>
</dbReference>
<dbReference type="FunCoup" id="A6NJW4">
    <property type="interactions" value="45"/>
</dbReference>
<dbReference type="IntAct" id="A6NJW4">
    <property type="interactions" value="1"/>
</dbReference>
<dbReference type="STRING" id="9606.ENSP00000367157"/>
<dbReference type="GlyCosmos" id="A6NJW4">
    <property type="glycosylation" value="1 site, No reported glycans"/>
</dbReference>
<dbReference type="GlyGen" id="A6NJW4">
    <property type="glycosylation" value="1 site"/>
</dbReference>
<dbReference type="iPTMnet" id="A6NJW4"/>
<dbReference type="PhosphoSitePlus" id="A6NJW4"/>
<dbReference type="BioMuta" id="LRRC3C"/>
<dbReference type="MassIVE" id="A6NJW4"/>
<dbReference type="PaxDb" id="9606-ENSP00000367157"/>
<dbReference type="Antibodypedia" id="71102">
    <property type="antibodies" value="56 antibodies from 13 providers"/>
</dbReference>
<dbReference type="DNASU" id="100505591"/>
<dbReference type="Ensembl" id="ENST00000377924.6">
    <property type="protein sequence ID" value="ENSP00000367157.4"/>
    <property type="gene ID" value="ENSG00000204913.7"/>
</dbReference>
<dbReference type="GeneID" id="100505591"/>
<dbReference type="KEGG" id="hsa:100505591"/>
<dbReference type="MANE-Select" id="ENST00000377924.6">
    <property type="protein sequence ID" value="ENSP00000367157.4"/>
    <property type="RefSeq nucleotide sequence ID" value="NM_001195545.2"/>
    <property type="RefSeq protein sequence ID" value="NP_001182474.1"/>
</dbReference>
<dbReference type="UCSC" id="uc021twv.2">
    <property type="organism name" value="human"/>
</dbReference>
<dbReference type="AGR" id="HGNC:40034"/>
<dbReference type="CTD" id="100505591"/>
<dbReference type="DisGeNET" id="100505591"/>
<dbReference type="GeneCards" id="LRRC3C"/>
<dbReference type="HGNC" id="HGNC:40034">
    <property type="gene designation" value="LRRC3C"/>
</dbReference>
<dbReference type="HPA" id="ENSG00000204913">
    <property type="expression patterns" value="Tissue enhanced (epididymis, testis)"/>
</dbReference>
<dbReference type="neXtProt" id="NX_A6NJW4"/>
<dbReference type="OpenTargets" id="ENSG00000204913"/>
<dbReference type="VEuPathDB" id="HostDB:ENSG00000204913"/>
<dbReference type="eggNOG" id="KOG4237">
    <property type="taxonomic scope" value="Eukaryota"/>
</dbReference>
<dbReference type="GeneTree" id="ENSGT00940000154360"/>
<dbReference type="HOGENOM" id="CLU_064640_1_0_1"/>
<dbReference type="InParanoid" id="A6NJW4"/>
<dbReference type="OMA" id="AFMGLQI"/>
<dbReference type="OrthoDB" id="1416801at2759"/>
<dbReference type="PAN-GO" id="A6NJW4">
    <property type="GO annotations" value="2 GO annotations based on evolutionary models"/>
</dbReference>
<dbReference type="PhylomeDB" id="A6NJW4"/>
<dbReference type="TreeFam" id="TF334047"/>
<dbReference type="PathwayCommons" id="A6NJW4"/>
<dbReference type="SignaLink" id="A6NJW4"/>
<dbReference type="BioGRID-ORCS" id="100505591">
    <property type="hits" value="24 hits in 1142 CRISPR screens"/>
</dbReference>
<dbReference type="ChiTaRS" id="LRRC3C">
    <property type="organism name" value="human"/>
</dbReference>
<dbReference type="GenomeRNAi" id="100505591"/>
<dbReference type="Pharos" id="A6NJW4">
    <property type="development level" value="Tdark"/>
</dbReference>
<dbReference type="PRO" id="PR:A6NJW4"/>
<dbReference type="Proteomes" id="UP000005640">
    <property type="component" value="Chromosome 17"/>
</dbReference>
<dbReference type="RNAct" id="A6NJW4">
    <property type="molecule type" value="protein"/>
</dbReference>
<dbReference type="Bgee" id="ENSG00000204913">
    <property type="expression patterns" value="Expressed in apex of heart and 24 other cell types or tissues"/>
</dbReference>
<dbReference type="GO" id="GO:0031012">
    <property type="term" value="C:extracellular matrix"/>
    <property type="evidence" value="ECO:0000318"/>
    <property type="project" value="GO_Central"/>
</dbReference>
<dbReference type="GO" id="GO:0005615">
    <property type="term" value="C:extracellular space"/>
    <property type="evidence" value="ECO:0000318"/>
    <property type="project" value="GO_Central"/>
</dbReference>
<dbReference type="GO" id="GO:0016020">
    <property type="term" value="C:membrane"/>
    <property type="evidence" value="ECO:0007669"/>
    <property type="project" value="UniProtKB-SubCell"/>
</dbReference>
<dbReference type="FunFam" id="3.80.10.10:FF:000240">
    <property type="entry name" value="Leucine rich repeat containing 3C"/>
    <property type="match status" value="1"/>
</dbReference>
<dbReference type="Gene3D" id="3.80.10.10">
    <property type="entry name" value="Ribonuclease Inhibitor"/>
    <property type="match status" value="1"/>
</dbReference>
<dbReference type="InterPro" id="IPR001611">
    <property type="entry name" value="Leu-rich_rpt"/>
</dbReference>
<dbReference type="InterPro" id="IPR003591">
    <property type="entry name" value="Leu-rich_rpt_typical-subtyp"/>
</dbReference>
<dbReference type="InterPro" id="IPR032675">
    <property type="entry name" value="LRR_dom_sf"/>
</dbReference>
<dbReference type="InterPro" id="IPR050541">
    <property type="entry name" value="LRR_TM_domain-containing"/>
</dbReference>
<dbReference type="PANTHER" id="PTHR24369">
    <property type="entry name" value="ANTIGEN BSP, PUTATIVE-RELATED"/>
    <property type="match status" value="1"/>
</dbReference>
<dbReference type="PANTHER" id="PTHR24369:SF217">
    <property type="entry name" value="LEUCINE-RICH REPEAT-CONTAINING PROTEIN 3B-LIKE"/>
    <property type="match status" value="1"/>
</dbReference>
<dbReference type="Pfam" id="PF13855">
    <property type="entry name" value="LRR_8"/>
    <property type="match status" value="1"/>
</dbReference>
<dbReference type="SMART" id="SM00369">
    <property type="entry name" value="LRR_TYP"/>
    <property type="match status" value="3"/>
</dbReference>
<dbReference type="SUPFAM" id="SSF52058">
    <property type="entry name" value="L domain-like"/>
    <property type="match status" value="1"/>
</dbReference>
<dbReference type="PROSITE" id="PS51450">
    <property type="entry name" value="LRR"/>
    <property type="match status" value="3"/>
</dbReference>
<protein>
    <recommendedName>
        <fullName>Leucine-rich repeat-containing protein 3C</fullName>
    </recommendedName>
</protein>
<proteinExistence type="evidence at transcript level"/>
<keyword id="KW-0325">Glycoprotein</keyword>
<keyword id="KW-0433">Leucine-rich repeat</keyword>
<keyword id="KW-0472">Membrane</keyword>
<keyword id="KW-1185">Reference proteome</keyword>
<keyword id="KW-0677">Repeat</keyword>
<keyword id="KW-0732">Signal</keyword>
<keyword id="KW-0812">Transmembrane</keyword>
<keyword id="KW-1133">Transmembrane helix</keyword>
<reference key="1">
    <citation type="journal article" date="2006" name="Nature">
        <title>DNA sequence of human chromosome 17 and analysis of rearrangement in the human lineage.</title>
        <authorList>
            <person name="Zody M.C."/>
            <person name="Garber M."/>
            <person name="Adams D.J."/>
            <person name="Sharpe T."/>
            <person name="Harrow J."/>
            <person name="Lupski J.R."/>
            <person name="Nicholson C."/>
            <person name="Searle S.M."/>
            <person name="Wilming L."/>
            <person name="Young S.K."/>
            <person name="Abouelleil A."/>
            <person name="Allen N.R."/>
            <person name="Bi W."/>
            <person name="Bloom T."/>
            <person name="Borowsky M.L."/>
            <person name="Bugalter B.E."/>
            <person name="Butler J."/>
            <person name="Chang J.L."/>
            <person name="Chen C.-K."/>
            <person name="Cook A."/>
            <person name="Corum B."/>
            <person name="Cuomo C.A."/>
            <person name="de Jong P.J."/>
            <person name="DeCaprio D."/>
            <person name="Dewar K."/>
            <person name="FitzGerald M."/>
            <person name="Gilbert J."/>
            <person name="Gibson R."/>
            <person name="Gnerre S."/>
            <person name="Goldstein S."/>
            <person name="Grafham D.V."/>
            <person name="Grocock R."/>
            <person name="Hafez N."/>
            <person name="Hagopian D.S."/>
            <person name="Hart E."/>
            <person name="Norman C.H."/>
            <person name="Humphray S."/>
            <person name="Jaffe D.B."/>
            <person name="Jones M."/>
            <person name="Kamal M."/>
            <person name="Khodiyar V.K."/>
            <person name="LaButti K."/>
            <person name="Laird G."/>
            <person name="Lehoczky J."/>
            <person name="Liu X."/>
            <person name="Lokyitsang T."/>
            <person name="Loveland J."/>
            <person name="Lui A."/>
            <person name="Macdonald P."/>
            <person name="Major J.E."/>
            <person name="Matthews L."/>
            <person name="Mauceli E."/>
            <person name="McCarroll S.A."/>
            <person name="Mihalev A.H."/>
            <person name="Mudge J."/>
            <person name="Nguyen C."/>
            <person name="Nicol R."/>
            <person name="O'Leary S.B."/>
            <person name="Osoegawa K."/>
            <person name="Schwartz D.C."/>
            <person name="Shaw-Smith C."/>
            <person name="Stankiewicz P."/>
            <person name="Steward C."/>
            <person name="Swarbreck D."/>
            <person name="Venkataraman V."/>
            <person name="Whittaker C.A."/>
            <person name="Yang X."/>
            <person name="Zimmer A.R."/>
            <person name="Bradley A."/>
            <person name="Hubbard T."/>
            <person name="Birren B.W."/>
            <person name="Rogers J."/>
            <person name="Lander E.S."/>
            <person name="Nusbaum C."/>
        </authorList>
    </citation>
    <scope>NUCLEOTIDE SEQUENCE [LARGE SCALE GENOMIC DNA]</scope>
</reference>
<reference key="2">
    <citation type="submission" date="2005-07" db="EMBL/GenBank/DDBJ databases">
        <authorList>
            <person name="Mural R.J."/>
            <person name="Istrail S."/>
            <person name="Sutton G.G."/>
            <person name="Florea L."/>
            <person name="Halpern A.L."/>
            <person name="Mobarry C.M."/>
            <person name="Lippert R."/>
            <person name="Walenz B."/>
            <person name="Shatkay H."/>
            <person name="Dew I."/>
            <person name="Miller J.R."/>
            <person name="Flanigan M.J."/>
            <person name="Edwards N.J."/>
            <person name="Bolanos R."/>
            <person name="Fasulo D."/>
            <person name="Halldorsson B.V."/>
            <person name="Hannenhalli S."/>
            <person name="Turner R."/>
            <person name="Yooseph S."/>
            <person name="Lu F."/>
            <person name="Nusskern D.R."/>
            <person name="Shue B.C."/>
            <person name="Zheng X.H."/>
            <person name="Zhong F."/>
            <person name="Delcher A.L."/>
            <person name="Huson D.H."/>
            <person name="Kravitz S.A."/>
            <person name="Mouchard L."/>
            <person name="Reinert K."/>
            <person name="Remington K.A."/>
            <person name="Clark A.G."/>
            <person name="Waterman M.S."/>
            <person name="Eichler E.E."/>
            <person name="Adams M.D."/>
            <person name="Hunkapiller M.W."/>
            <person name="Myers E.W."/>
            <person name="Venter J.C."/>
        </authorList>
    </citation>
    <scope>NUCLEOTIDE SEQUENCE [LARGE SCALE GENOMIC DNA]</scope>
</reference>
<reference key="3">
    <citation type="submission" date="2006-03" db="EMBL/GenBank/DDBJ databases">
        <title>Exhaustive RT-PCR and sequencing of all novel TWINSCAN predictions in human.</title>
        <authorList>
            <person name="Stevens M."/>
            <person name="Wei C."/>
            <person name="Gross S.S."/>
            <person name="McPherson J."/>
            <person name="Brent M.R."/>
        </authorList>
    </citation>
    <scope>NUCLEOTIDE SEQUENCE [LARGE SCALE MRNA] OF 1-117</scope>
</reference>
<organism>
    <name type="scientific">Homo sapiens</name>
    <name type="common">Human</name>
    <dbReference type="NCBI Taxonomy" id="9606"/>
    <lineage>
        <taxon>Eukaryota</taxon>
        <taxon>Metazoa</taxon>
        <taxon>Chordata</taxon>
        <taxon>Craniata</taxon>
        <taxon>Vertebrata</taxon>
        <taxon>Euteleostomi</taxon>
        <taxon>Mammalia</taxon>
        <taxon>Eutheria</taxon>
        <taxon>Euarchontoglires</taxon>
        <taxon>Primates</taxon>
        <taxon>Haplorrhini</taxon>
        <taxon>Catarrhini</taxon>
        <taxon>Hominidae</taxon>
        <taxon>Homo</taxon>
    </lineage>
</organism>
<comment type="subcellular location">
    <subcellularLocation>
        <location evidence="2">Membrane</location>
        <topology evidence="2">Single-pass membrane protein</topology>
    </subcellularLocation>
</comment>
<comment type="similarity">
    <text evidence="2">Belongs to the LRRC3 family.</text>
</comment>
<comment type="sequence caution" evidence="2">
    <conflict type="erroneous gene model prediction">
        <sequence resource="EMBL-CDS" id="EAW60623"/>
    </conflict>
</comment>
<gene>
    <name type="primary">LRRC3C</name>
</gene>